<keyword id="KW-0028">Amino-acid biosynthesis</keyword>
<keyword id="KW-0055">Arginine biosynthesis</keyword>
<keyword id="KW-0963">Cytoplasm</keyword>
<keyword id="KW-0238">DNA-binding</keyword>
<keyword id="KW-0678">Repressor</keyword>
<keyword id="KW-0804">Transcription</keyword>
<keyword id="KW-0805">Transcription regulation</keyword>
<gene>
    <name evidence="1" type="primary">argR</name>
    <name type="ordered locus">SCH_3298</name>
</gene>
<dbReference type="EMBL" id="AE017220">
    <property type="protein sequence ID" value="AAX67204.1"/>
    <property type="molecule type" value="Genomic_DNA"/>
</dbReference>
<dbReference type="RefSeq" id="WP_001257852.1">
    <property type="nucleotide sequence ID" value="NC_006905.1"/>
</dbReference>
<dbReference type="SMR" id="Q57JA8"/>
<dbReference type="KEGG" id="sec:SCH_3298"/>
<dbReference type="HOGENOM" id="CLU_097103_2_0_6"/>
<dbReference type="UniPathway" id="UPA00068"/>
<dbReference type="Proteomes" id="UP000000538">
    <property type="component" value="Chromosome"/>
</dbReference>
<dbReference type="GO" id="GO:0005737">
    <property type="term" value="C:cytoplasm"/>
    <property type="evidence" value="ECO:0007669"/>
    <property type="project" value="UniProtKB-SubCell"/>
</dbReference>
<dbReference type="GO" id="GO:0034618">
    <property type="term" value="F:arginine binding"/>
    <property type="evidence" value="ECO:0007669"/>
    <property type="project" value="InterPro"/>
</dbReference>
<dbReference type="GO" id="GO:0003677">
    <property type="term" value="F:DNA binding"/>
    <property type="evidence" value="ECO:0007669"/>
    <property type="project" value="UniProtKB-KW"/>
</dbReference>
<dbReference type="GO" id="GO:0003700">
    <property type="term" value="F:DNA-binding transcription factor activity"/>
    <property type="evidence" value="ECO:0007669"/>
    <property type="project" value="UniProtKB-UniRule"/>
</dbReference>
<dbReference type="GO" id="GO:0006526">
    <property type="term" value="P:L-arginine biosynthetic process"/>
    <property type="evidence" value="ECO:0007669"/>
    <property type="project" value="UniProtKB-UniPathway"/>
</dbReference>
<dbReference type="GO" id="GO:0051259">
    <property type="term" value="P:protein complex oligomerization"/>
    <property type="evidence" value="ECO:0007669"/>
    <property type="project" value="InterPro"/>
</dbReference>
<dbReference type="GO" id="GO:1900079">
    <property type="term" value="P:regulation of arginine biosynthetic process"/>
    <property type="evidence" value="ECO:0007669"/>
    <property type="project" value="UniProtKB-UniRule"/>
</dbReference>
<dbReference type="FunFam" id="1.10.10.10:FF:000074">
    <property type="entry name" value="Arginine repressor"/>
    <property type="match status" value="1"/>
</dbReference>
<dbReference type="FunFam" id="3.30.1360.40:FF:000004">
    <property type="entry name" value="Arginine repressor"/>
    <property type="match status" value="1"/>
</dbReference>
<dbReference type="Gene3D" id="3.30.1360.40">
    <property type="match status" value="1"/>
</dbReference>
<dbReference type="Gene3D" id="1.10.10.10">
    <property type="entry name" value="Winged helix-like DNA-binding domain superfamily/Winged helix DNA-binding domain"/>
    <property type="match status" value="1"/>
</dbReference>
<dbReference type="HAMAP" id="MF_00173">
    <property type="entry name" value="Arg_repressor"/>
    <property type="match status" value="1"/>
</dbReference>
<dbReference type="InterPro" id="IPR001669">
    <property type="entry name" value="Arg_repress"/>
</dbReference>
<dbReference type="InterPro" id="IPR020899">
    <property type="entry name" value="Arg_repress_C"/>
</dbReference>
<dbReference type="InterPro" id="IPR036251">
    <property type="entry name" value="Arg_repress_C_sf"/>
</dbReference>
<dbReference type="InterPro" id="IPR020900">
    <property type="entry name" value="Arg_repress_DNA-bd"/>
</dbReference>
<dbReference type="InterPro" id="IPR036388">
    <property type="entry name" value="WH-like_DNA-bd_sf"/>
</dbReference>
<dbReference type="InterPro" id="IPR036390">
    <property type="entry name" value="WH_DNA-bd_sf"/>
</dbReference>
<dbReference type="NCBIfam" id="TIGR01529">
    <property type="entry name" value="argR_whole"/>
    <property type="match status" value="1"/>
</dbReference>
<dbReference type="NCBIfam" id="NF003457">
    <property type="entry name" value="PRK05066.1"/>
    <property type="match status" value="1"/>
</dbReference>
<dbReference type="PANTHER" id="PTHR34471">
    <property type="entry name" value="ARGININE REPRESSOR"/>
    <property type="match status" value="1"/>
</dbReference>
<dbReference type="PANTHER" id="PTHR34471:SF1">
    <property type="entry name" value="ARGININE REPRESSOR"/>
    <property type="match status" value="1"/>
</dbReference>
<dbReference type="Pfam" id="PF01316">
    <property type="entry name" value="Arg_repressor"/>
    <property type="match status" value="1"/>
</dbReference>
<dbReference type="Pfam" id="PF02863">
    <property type="entry name" value="Arg_repressor_C"/>
    <property type="match status" value="1"/>
</dbReference>
<dbReference type="PRINTS" id="PR01467">
    <property type="entry name" value="ARGREPRESSOR"/>
</dbReference>
<dbReference type="SUPFAM" id="SSF55252">
    <property type="entry name" value="C-terminal domain of arginine repressor"/>
    <property type="match status" value="1"/>
</dbReference>
<dbReference type="SUPFAM" id="SSF46785">
    <property type="entry name" value="Winged helix' DNA-binding domain"/>
    <property type="match status" value="1"/>
</dbReference>
<accession>Q57JA8</accession>
<evidence type="ECO:0000255" key="1">
    <source>
        <dbReference type="HAMAP-Rule" id="MF_00173"/>
    </source>
</evidence>
<reference key="1">
    <citation type="journal article" date="2005" name="Nucleic Acids Res.">
        <title>The genome sequence of Salmonella enterica serovar Choleraesuis, a highly invasive and resistant zoonotic pathogen.</title>
        <authorList>
            <person name="Chiu C.-H."/>
            <person name="Tang P."/>
            <person name="Chu C."/>
            <person name="Hu S."/>
            <person name="Bao Q."/>
            <person name="Yu J."/>
            <person name="Chou Y.-Y."/>
            <person name="Wang H.-S."/>
            <person name="Lee Y.-S."/>
        </authorList>
    </citation>
    <scope>NUCLEOTIDE SEQUENCE [LARGE SCALE GENOMIC DNA]</scope>
    <source>
        <strain>SC-B67</strain>
    </source>
</reference>
<organism>
    <name type="scientific">Salmonella choleraesuis (strain SC-B67)</name>
    <dbReference type="NCBI Taxonomy" id="321314"/>
    <lineage>
        <taxon>Bacteria</taxon>
        <taxon>Pseudomonadati</taxon>
        <taxon>Pseudomonadota</taxon>
        <taxon>Gammaproteobacteria</taxon>
        <taxon>Enterobacterales</taxon>
        <taxon>Enterobacteriaceae</taxon>
        <taxon>Salmonella</taxon>
    </lineage>
</organism>
<sequence length="156" mass="17066">MRSSAKQEELVRAFKALLKEEKFSSQGEIVLALQDQGFENINQSKVSRMLTKFGAVRTRNAKMEMVYCLPAELGVPTTSSPLKNLVLDIDYNDAVVVIHTSPGAAQLIARLLDSLGKAEGILGTIAGDDTIFTTPASGFSVRDLYEAILELFEQEL</sequence>
<feature type="chain" id="PRO_1000023586" description="Arginine repressor">
    <location>
        <begin position="1"/>
        <end position="156"/>
    </location>
</feature>
<protein>
    <recommendedName>
        <fullName evidence="1">Arginine repressor</fullName>
    </recommendedName>
</protein>
<name>ARGR_SALCH</name>
<comment type="function">
    <text evidence="1">Regulates arginine biosynthesis genes.</text>
</comment>
<comment type="pathway">
    <text>Amino-acid biosynthesis; L-arginine biosynthesis [regulation].</text>
</comment>
<comment type="subcellular location">
    <subcellularLocation>
        <location evidence="1">Cytoplasm</location>
    </subcellularLocation>
</comment>
<comment type="similarity">
    <text evidence="1">Belongs to the ArgR family.</text>
</comment>
<proteinExistence type="inferred from homology"/>